<proteinExistence type="evidence at transcript level"/>
<evidence type="ECO:0000250" key="1"/>
<evidence type="ECO:0000255" key="2">
    <source>
        <dbReference type="PROSITE-ProRule" id="PRU00117"/>
    </source>
</evidence>
<evidence type="ECO:0000255" key="3">
    <source>
        <dbReference type="PROSITE-ProRule" id="PRU00184"/>
    </source>
</evidence>
<evidence type="ECO:0000256" key="4">
    <source>
        <dbReference type="SAM" id="MobiDB-lite"/>
    </source>
</evidence>
<evidence type="ECO:0000305" key="5"/>
<accession>Q5U4T7</accession>
<gene>
    <name type="primary">bicc1-b</name>
</gene>
<keyword id="KW-0217">Developmental protein</keyword>
<keyword id="KW-1185">Reference proteome</keyword>
<keyword id="KW-0677">Repeat</keyword>
<keyword id="KW-0694">RNA-binding</keyword>
<dbReference type="EMBL" id="BC084957">
    <property type="protein sequence ID" value="AAH84957.1"/>
    <property type="molecule type" value="mRNA"/>
</dbReference>
<dbReference type="SMR" id="Q5U4T7"/>
<dbReference type="DNASU" id="495436"/>
<dbReference type="GeneID" id="495436"/>
<dbReference type="KEGG" id="xla:495436"/>
<dbReference type="AGR" id="Xenbase:XB-GENE-865790"/>
<dbReference type="CTD" id="495436"/>
<dbReference type="Xenbase" id="XB-GENE-865790">
    <property type="gene designation" value="bicc1.L"/>
</dbReference>
<dbReference type="OrthoDB" id="271862at2759"/>
<dbReference type="Proteomes" id="UP000186698">
    <property type="component" value="Chromosome 7L"/>
</dbReference>
<dbReference type="Bgee" id="495436">
    <property type="expression patterns" value="Expressed in egg cell and 17 other cell types or tissues"/>
</dbReference>
<dbReference type="GO" id="GO:0005737">
    <property type="term" value="C:cytoplasm"/>
    <property type="evidence" value="ECO:0000318"/>
    <property type="project" value="GO_Central"/>
</dbReference>
<dbReference type="GO" id="GO:0003723">
    <property type="term" value="F:RNA binding"/>
    <property type="evidence" value="ECO:0007669"/>
    <property type="project" value="UniProtKB-KW"/>
</dbReference>
<dbReference type="CDD" id="cd22420">
    <property type="entry name" value="KH-I_BICC1_rpt1"/>
    <property type="match status" value="1"/>
</dbReference>
<dbReference type="CDD" id="cd22421">
    <property type="entry name" value="KH-I_BICC1_rpt2"/>
    <property type="match status" value="1"/>
</dbReference>
<dbReference type="CDD" id="cd22422">
    <property type="entry name" value="KH-I_BICC1_rpt3"/>
    <property type="match status" value="1"/>
</dbReference>
<dbReference type="CDD" id="cd09520">
    <property type="entry name" value="SAM_BICC1"/>
    <property type="match status" value="1"/>
</dbReference>
<dbReference type="FunFam" id="1.10.150.50:FF:000025">
    <property type="entry name" value="Ankyrin repeat and sterile alpha motif domain-containing 6"/>
    <property type="match status" value="1"/>
</dbReference>
<dbReference type="FunFam" id="3.30.310.270:FF:000001">
    <property type="entry name" value="BicC family RNA binding protein 1"/>
    <property type="match status" value="1"/>
</dbReference>
<dbReference type="FunFam" id="3.30.310.270:FF:000002">
    <property type="entry name" value="BicC family RNA binding protein 1"/>
    <property type="match status" value="1"/>
</dbReference>
<dbReference type="Gene3D" id="3.30.310.270">
    <property type="match status" value="2"/>
</dbReference>
<dbReference type="Gene3D" id="3.30.1370.10">
    <property type="entry name" value="K Homology domain, type 1"/>
    <property type="match status" value="1"/>
</dbReference>
<dbReference type="Gene3D" id="1.10.150.50">
    <property type="entry name" value="Transcription Factor, Ets-1"/>
    <property type="match status" value="1"/>
</dbReference>
<dbReference type="InterPro" id="IPR054727">
    <property type="entry name" value="BICC1_KH"/>
</dbReference>
<dbReference type="InterPro" id="IPR047549">
    <property type="entry name" value="BICC1_KH-I_rpt1"/>
</dbReference>
<dbReference type="InterPro" id="IPR047554">
    <property type="entry name" value="BICC1_KH-I_rpt2"/>
</dbReference>
<dbReference type="InterPro" id="IPR047553">
    <property type="entry name" value="BICC1_KH-I_rpt3"/>
</dbReference>
<dbReference type="InterPro" id="IPR037974">
    <property type="entry name" value="BICC1_SAM_dom"/>
</dbReference>
<dbReference type="InterPro" id="IPR004087">
    <property type="entry name" value="KH_dom"/>
</dbReference>
<dbReference type="InterPro" id="IPR004088">
    <property type="entry name" value="KH_dom_type_1"/>
</dbReference>
<dbReference type="InterPro" id="IPR036612">
    <property type="entry name" value="KH_dom_type_1_sf"/>
</dbReference>
<dbReference type="InterPro" id="IPR001660">
    <property type="entry name" value="SAM"/>
</dbReference>
<dbReference type="InterPro" id="IPR013761">
    <property type="entry name" value="SAM/pointed_sf"/>
</dbReference>
<dbReference type="PANTHER" id="PTHR10627:SF78">
    <property type="entry name" value="PROTEIN BICAUDAL C HOMOLOG 1"/>
    <property type="match status" value="1"/>
</dbReference>
<dbReference type="PANTHER" id="PTHR10627">
    <property type="entry name" value="SCP160"/>
    <property type="match status" value="1"/>
</dbReference>
<dbReference type="Pfam" id="PF00013">
    <property type="entry name" value="KH_1"/>
    <property type="match status" value="2"/>
</dbReference>
<dbReference type="Pfam" id="PF22985">
    <property type="entry name" value="KH_BICC1"/>
    <property type="match status" value="2"/>
</dbReference>
<dbReference type="Pfam" id="PF24234">
    <property type="entry name" value="KH_BICC1_1st"/>
    <property type="match status" value="1"/>
</dbReference>
<dbReference type="Pfam" id="PF00536">
    <property type="entry name" value="SAM_1"/>
    <property type="match status" value="1"/>
</dbReference>
<dbReference type="SMART" id="SM00322">
    <property type="entry name" value="KH"/>
    <property type="match status" value="3"/>
</dbReference>
<dbReference type="SMART" id="SM00454">
    <property type="entry name" value="SAM"/>
    <property type="match status" value="1"/>
</dbReference>
<dbReference type="SUPFAM" id="SSF54791">
    <property type="entry name" value="Eukaryotic type KH-domain (KH-domain type I)"/>
    <property type="match status" value="3"/>
</dbReference>
<dbReference type="SUPFAM" id="SSF47769">
    <property type="entry name" value="SAM/Pointed domain"/>
    <property type="match status" value="1"/>
</dbReference>
<dbReference type="PROSITE" id="PS50084">
    <property type="entry name" value="KH_TYPE_1"/>
    <property type="match status" value="2"/>
</dbReference>
<dbReference type="PROSITE" id="PS50105">
    <property type="entry name" value="SAM_DOMAIN"/>
    <property type="match status" value="1"/>
</dbReference>
<feature type="chain" id="PRO_0000267717" description="Protein bicaudal C homolog 1-B">
    <location>
        <begin position="1"/>
        <end position="970"/>
    </location>
</feature>
<feature type="domain" description="KH 1" evidence="2">
    <location>
        <begin position="130"/>
        <end position="197"/>
    </location>
</feature>
<feature type="domain" description="KH 2" evidence="2">
    <location>
        <begin position="282"/>
        <end position="346"/>
    </location>
</feature>
<feature type="domain" description="SAM" evidence="3">
    <location>
        <begin position="869"/>
        <end position="932"/>
    </location>
</feature>
<feature type="region of interest" description="Disordered" evidence="4">
    <location>
        <begin position="1"/>
        <end position="50"/>
    </location>
</feature>
<feature type="region of interest" description="Disordered" evidence="4">
    <location>
        <begin position="596"/>
        <end position="638"/>
    </location>
</feature>
<feature type="region of interest" description="Disordered" evidence="4">
    <location>
        <begin position="677"/>
        <end position="696"/>
    </location>
</feature>
<feature type="region of interest" description="Disordered" evidence="4">
    <location>
        <begin position="773"/>
        <end position="841"/>
    </location>
</feature>
<feature type="compositionally biased region" description="Polar residues" evidence="4">
    <location>
        <begin position="9"/>
        <end position="19"/>
    </location>
</feature>
<feature type="compositionally biased region" description="Basic and acidic residues" evidence="4">
    <location>
        <begin position="40"/>
        <end position="50"/>
    </location>
</feature>
<feature type="compositionally biased region" description="Polar residues" evidence="4">
    <location>
        <begin position="596"/>
        <end position="605"/>
    </location>
</feature>
<feature type="compositionally biased region" description="Basic and acidic residues" evidence="4">
    <location>
        <begin position="606"/>
        <end position="616"/>
    </location>
</feature>
<feature type="compositionally biased region" description="Polar residues" evidence="4">
    <location>
        <begin position="783"/>
        <end position="810"/>
    </location>
</feature>
<feature type="compositionally biased region" description="Polar residues" evidence="4">
    <location>
        <begin position="819"/>
        <end position="831"/>
    </location>
</feature>
<organism>
    <name type="scientific">Xenopus laevis</name>
    <name type="common">African clawed frog</name>
    <dbReference type="NCBI Taxonomy" id="8355"/>
    <lineage>
        <taxon>Eukaryota</taxon>
        <taxon>Metazoa</taxon>
        <taxon>Chordata</taxon>
        <taxon>Craniata</taxon>
        <taxon>Vertebrata</taxon>
        <taxon>Euteleostomi</taxon>
        <taxon>Amphibia</taxon>
        <taxon>Batrachia</taxon>
        <taxon>Anura</taxon>
        <taxon>Pipoidea</taxon>
        <taxon>Pipidae</taxon>
        <taxon>Xenopodinae</taxon>
        <taxon>Xenopus</taxon>
        <taxon>Xenopus</taxon>
    </lineage>
</organism>
<sequence>MAAQCGGYMNQSDPGSNSERSADSPLPGSEDDSPGSAAPHDPEWREERFRVDRKKLETMLQAAAEGKGKSGEDFFQKIMEETNTQIAWPSKLKIGAKSKKDPHIKVSGKKENVKEAKERIMSVLDTKSNRVTLKMDVSHTEHSHVIGKGGNNIKKVMEETGCHIHFPDSNRNNQAEKSNQVSIAGQPAGVESARVRIRELLPLVLMFELPIAGILQPIPDPNSPTIQQISQTYNITVSFKQRSRVYGATVIVRGSQNNTSAVKEGTAMLLEHLAGSLASAIPVSTQLDIAAQHHLFMMGRNGCNIKHIMQRTGAQIHFPDPNNPLKKSTVYLQGTIESVCLARQYLMGCLPLVLMFDMKEEIEVEPQCITQLMEQLDVFISIKPKPKQPSKSVIVKSVERNALNMYEARKCLLGLDSSGVTITNQSTISCPIPMNCHGLDILAAGLGLSGLGLLGPNTLSVNSTTAQNSLLNALNSSVSPLHSPSSAAPSPTLWATSLANTSNATGFPAIPHLMIPSAAQATLTNFLLSGVPNYGQNTPSPPPGLTPVDVHMNGLHSECKKVTSVLNGHVKPTNMKYGTISSSSLGDKVLNTNLAEASRQSNNHSSAEEVNSKTDSEGCNDAFVEVGMPRSPSHSANTKDLKQMLNSTKAPCPTRQTVKLLHGTKNSHLHTAERLLSDSEMSPTEGPMTDKKAPGSERAAERAAAQHNCEMARFTSQSAYGNMQAYDYEQKKLLATKAMLKKPVVTEVRTPTNTWSGLGFSKSMPAETIKELRRANHVPYKPTMSTTYENSPMSLSRSNSREQLGNGSDSDNWRERNGIDSSHNDYSSSIGSPKRKQNKSAEHYLSSSNYMDCISSLTGSNGCNLNSSFKGSDLPELFSKLGLGKYTDIFQQQEIDLQTFLTLTDQDLKELGITTFGARRKMLLAISELNKNRRKLFEPTNIRSSFLEGGASGRLPRQYHTDIASVSGRW</sequence>
<protein>
    <recommendedName>
        <fullName>Protein bicaudal C homolog 1-B</fullName>
        <shortName>Bic-C-B</shortName>
    </recommendedName>
</protein>
<reference key="1">
    <citation type="submission" date="2004-10" db="EMBL/GenBank/DDBJ databases">
        <authorList>
            <consortium name="NIH - Xenopus Gene Collection (XGC) project"/>
        </authorList>
    </citation>
    <scope>NUCLEOTIDE SEQUENCE [LARGE SCALE MRNA]</scope>
    <source>
        <tissue>Oocyte</tissue>
    </source>
</reference>
<name>BIC1B_XENLA</name>
<comment type="function">
    <text evidence="1">Putative RNA-binding protein. May be involved in regulating gene expression during embryonic development. Seems to be involved in endoderm formation. Ectopic expression results in endoderm formation in the absence of mesoderm induction (By similarity).</text>
</comment>
<comment type="similarity">
    <text evidence="5">Belongs to the BicC family.</text>
</comment>